<evidence type="ECO:0000255" key="1">
    <source>
        <dbReference type="HAMAP-Rule" id="MF_00191"/>
    </source>
</evidence>
<accession>B1XBF4</accession>
<proteinExistence type="inferred from homology"/>
<reference key="1">
    <citation type="journal article" date="2008" name="J. Bacteriol.">
        <title>The complete genome sequence of Escherichia coli DH10B: insights into the biology of a laboratory workhorse.</title>
        <authorList>
            <person name="Durfee T."/>
            <person name="Nelson R."/>
            <person name="Baldwin S."/>
            <person name="Plunkett G. III"/>
            <person name="Burland V."/>
            <person name="Mau B."/>
            <person name="Petrosino J.F."/>
            <person name="Qin X."/>
            <person name="Muzny D.M."/>
            <person name="Ayele M."/>
            <person name="Gibbs R.A."/>
            <person name="Csorgo B."/>
            <person name="Posfai G."/>
            <person name="Weinstock G.M."/>
            <person name="Blattner F.R."/>
        </authorList>
    </citation>
    <scope>NUCLEOTIDE SEQUENCE [LARGE SCALE GENOMIC DNA]</scope>
    <source>
        <strain>K12 / DH10B</strain>
    </source>
</reference>
<keyword id="KW-0004">4Fe-4S</keyword>
<keyword id="KW-0408">Iron</keyword>
<keyword id="KW-0411">Iron-sulfur</keyword>
<keyword id="KW-0414">Isoprene biosynthesis</keyword>
<keyword id="KW-0479">Metal-binding</keyword>
<keyword id="KW-0560">Oxidoreductase</keyword>
<organism>
    <name type="scientific">Escherichia coli (strain K12 / DH10B)</name>
    <dbReference type="NCBI Taxonomy" id="316385"/>
    <lineage>
        <taxon>Bacteria</taxon>
        <taxon>Pseudomonadati</taxon>
        <taxon>Pseudomonadota</taxon>
        <taxon>Gammaproteobacteria</taxon>
        <taxon>Enterobacterales</taxon>
        <taxon>Enterobacteriaceae</taxon>
        <taxon>Escherichia</taxon>
    </lineage>
</organism>
<name>ISPH_ECODH</name>
<sequence length="316" mass="34775">MQILLANPRGFCAGVDRAISIVENALAIYGAPIYVRHEVVHNRYVVDSLRERGAIFIEQISEVPDGAILIFSAHGVSQAVRNEAKSRDLTVFDATCPLVTKVHMEVARASRRGEESILIGHAGHPEVEGTMGQYSNPEGGMYLVESPDDVWKLTVKNEEKLSFMTQTTLSVDDTSDVIDALRKRFPKIVGPRKDDICYATTNRQEAVRALAEQAEVVLVVGSKNSSNSNRLAELAQRMGKRAFLIDDAKDIQEEWVKEVKCVGVTAGASAPDILVQNVVARLQQLGGGEAIPLEGREENIVFEVPKELRVDIREVD</sequence>
<feature type="chain" id="PRO_1000098946" description="4-hydroxy-3-methylbut-2-enyl diphosphate reductase">
    <location>
        <begin position="1"/>
        <end position="316"/>
    </location>
</feature>
<feature type="active site" description="Proton donor" evidence="1">
    <location>
        <position position="126"/>
    </location>
</feature>
<feature type="binding site" evidence="1">
    <location>
        <position position="12"/>
    </location>
    <ligand>
        <name>[4Fe-4S] cluster</name>
        <dbReference type="ChEBI" id="CHEBI:49883"/>
    </ligand>
</feature>
<feature type="binding site" evidence="1">
    <location>
        <position position="41"/>
    </location>
    <ligand>
        <name>(2E)-4-hydroxy-3-methylbut-2-enyl diphosphate</name>
        <dbReference type="ChEBI" id="CHEBI:128753"/>
    </ligand>
</feature>
<feature type="binding site" evidence="1">
    <location>
        <position position="41"/>
    </location>
    <ligand>
        <name>dimethylallyl diphosphate</name>
        <dbReference type="ChEBI" id="CHEBI:57623"/>
    </ligand>
</feature>
<feature type="binding site" evidence="1">
    <location>
        <position position="41"/>
    </location>
    <ligand>
        <name>isopentenyl diphosphate</name>
        <dbReference type="ChEBI" id="CHEBI:128769"/>
    </ligand>
</feature>
<feature type="binding site" evidence="1">
    <location>
        <position position="74"/>
    </location>
    <ligand>
        <name>(2E)-4-hydroxy-3-methylbut-2-enyl diphosphate</name>
        <dbReference type="ChEBI" id="CHEBI:128753"/>
    </ligand>
</feature>
<feature type="binding site" evidence="1">
    <location>
        <position position="74"/>
    </location>
    <ligand>
        <name>dimethylallyl diphosphate</name>
        <dbReference type="ChEBI" id="CHEBI:57623"/>
    </ligand>
</feature>
<feature type="binding site" evidence="1">
    <location>
        <position position="74"/>
    </location>
    <ligand>
        <name>isopentenyl diphosphate</name>
        <dbReference type="ChEBI" id="CHEBI:128769"/>
    </ligand>
</feature>
<feature type="binding site" evidence="1">
    <location>
        <position position="96"/>
    </location>
    <ligand>
        <name>[4Fe-4S] cluster</name>
        <dbReference type="ChEBI" id="CHEBI:49883"/>
    </ligand>
</feature>
<feature type="binding site" evidence="1">
    <location>
        <position position="124"/>
    </location>
    <ligand>
        <name>(2E)-4-hydroxy-3-methylbut-2-enyl diphosphate</name>
        <dbReference type="ChEBI" id="CHEBI:128753"/>
    </ligand>
</feature>
<feature type="binding site" evidence="1">
    <location>
        <position position="124"/>
    </location>
    <ligand>
        <name>dimethylallyl diphosphate</name>
        <dbReference type="ChEBI" id="CHEBI:57623"/>
    </ligand>
</feature>
<feature type="binding site" evidence="1">
    <location>
        <position position="124"/>
    </location>
    <ligand>
        <name>isopentenyl diphosphate</name>
        <dbReference type="ChEBI" id="CHEBI:128769"/>
    </ligand>
</feature>
<feature type="binding site" evidence="1">
    <location>
        <position position="167"/>
    </location>
    <ligand>
        <name>(2E)-4-hydroxy-3-methylbut-2-enyl diphosphate</name>
        <dbReference type="ChEBI" id="CHEBI:128753"/>
    </ligand>
</feature>
<feature type="binding site" evidence="1">
    <location>
        <position position="197"/>
    </location>
    <ligand>
        <name>[4Fe-4S] cluster</name>
        <dbReference type="ChEBI" id="CHEBI:49883"/>
    </ligand>
</feature>
<feature type="binding site" evidence="1">
    <location>
        <position position="225"/>
    </location>
    <ligand>
        <name>(2E)-4-hydroxy-3-methylbut-2-enyl diphosphate</name>
        <dbReference type="ChEBI" id="CHEBI:128753"/>
    </ligand>
</feature>
<feature type="binding site" evidence="1">
    <location>
        <position position="225"/>
    </location>
    <ligand>
        <name>dimethylallyl diphosphate</name>
        <dbReference type="ChEBI" id="CHEBI:57623"/>
    </ligand>
</feature>
<feature type="binding site" evidence="1">
    <location>
        <position position="225"/>
    </location>
    <ligand>
        <name>isopentenyl diphosphate</name>
        <dbReference type="ChEBI" id="CHEBI:128769"/>
    </ligand>
</feature>
<feature type="binding site" evidence="1">
    <location>
        <position position="226"/>
    </location>
    <ligand>
        <name>(2E)-4-hydroxy-3-methylbut-2-enyl diphosphate</name>
        <dbReference type="ChEBI" id="CHEBI:128753"/>
    </ligand>
</feature>
<feature type="binding site" evidence="1">
    <location>
        <position position="226"/>
    </location>
    <ligand>
        <name>dimethylallyl diphosphate</name>
        <dbReference type="ChEBI" id="CHEBI:57623"/>
    </ligand>
</feature>
<feature type="binding site" evidence="1">
    <location>
        <position position="226"/>
    </location>
    <ligand>
        <name>isopentenyl diphosphate</name>
        <dbReference type="ChEBI" id="CHEBI:128769"/>
    </ligand>
</feature>
<feature type="binding site" evidence="1">
    <location>
        <position position="227"/>
    </location>
    <ligand>
        <name>(2E)-4-hydroxy-3-methylbut-2-enyl diphosphate</name>
        <dbReference type="ChEBI" id="CHEBI:128753"/>
    </ligand>
</feature>
<feature type="binding site" evidence="1">
    <location>
        <position position="227"/>
    </location>
    <ligand>
        <name>dimethylallyl diphosphate</name>
        <dbReference type="ChEBI" id="CHEBI:57623"/>
    </ligand>
</feature>
<feature type="binding site" evidence="1">
    <location>
        <position position="227"/>
    </location>
    <ligand>
        <name>isopentenyl diphosphate</name>
        <dbReference type="ChEBI" id="CHEBI:128769"/>
    </ligand>
</feature>
<feature type="binding site" evidence="1">
    <location>
        <position position="269"/>
    </location>
    <ligand>
        <name>(2E)-4-hydroxy-3-methylbut-2-enyl diphosphate</name>
        <dbReference type="ChEBI" id="CHEBI:128753"/>
    </ligand>
</feature>
<feature type="binding site" evidence="1">
    <location>
        <position position="269"/>
    </location>
    <ligand>
        <name>dimethylallyl diphosphate</name>
        <dbReference type="ChEBI" id="CHEBI:57623"/>
    </ligand>
</feature>
<feature type="binding site" evidence="1">
    <location>
        <position position="269"/>
    </location>
    <ligand>
        <name>isopentenyl diphosphate</name>
        <dbReference type="ChEBI" id="CHEBI:128769"/>
    </ligand>
</feature>
<gene>
    <name evidence="1" type="primary">ispH</name>
    <name type="ordered locus">ECDH10B_0030</name>
</gene>
<protein>
    <recommendedName>
        <fullName evidence="1">4-hydroxy-3-methylbut-2-enyl diphosphate reductase</fullName>
        <shortName evidence="1">HMBPP reductase</shortName>
        <ecNumber evidence="1">1.17.7.4</ecNumber>
    </recommendedName>
</protein>
<dbReference type="EC" id="1.17.7.4" evidence="1"/>
<dbReference type="EMBL" id="CP000948">
    <property type="protein sequence ID" value="ACB01234.1"/>
    <property type="molecule type" value="Genomic_DNA"/>
</dbReference>
<dbReference type="RefSeq" id="WP_001166395.1">
    <property type="nucleotide sequence ID" value="NC_010473.1"/>
</dbReference>
<dbReference type="SMR" id="B1XBF4"/>
<dbReference type="GeneID" id="93777407"/>
<dbReference type="KEGG" id="ecd:ECDH10B_0030"/>
<dbReference type="HOGENOM" id="CLU_027486_1_0_6"/>
<dbReference type="UniPathway" id="UPA00056">
    <property type="reaction ID" value="UER00097"/>
</dbReference>
<dbReference type="UniPathway" id="UPA00059">
    <property type="reaction ID" value="UER00105"/>
</dbReference>
<dbReference type="GO" id="GO:0051539">
    <property type="term" value="F:4 iron, 4 sulfur cluster binding"/>
    <property type="evidence" value="ECO:0007669"/>
    <property type="project" value="UniProtKB-UniRule"/>
</dbReference>
<dbReference type="GO" id="GO:0051745">
    <property type="term" value="F:4-hydroxy-3-methylbut-2-enyl diphosphate reductase activity"/>
    <property type="evidence" value="ECO:0007669"/>
    <property type="project" value="UniProtKB-UniRule"/>
</dbReference>
<dbReference type="GO" id="GO:0046872">
    <property type="term" value="F:metal ion binding"/>
    <property type="evidence" value="ECO:0007669"/>
    <property type="project" value="UniProtKB-KW"/>
</dbReference>
<dbReference type="GO" id="GO:0050992">
    <property type="term" value="P:dimethylallyl diphosphate biosynthetic process"/>
    <property type="evidence" value="ECO:0007669"/>
    <property type="project" value="UniProtKB-UniRule"/>
</dbReference>
<dbReference type="GO" id="GO:0019288">
    <property type="term" value="P:isopentenyl diphosphate biosynthetic process, methylerythritol 4-phosphate pathway"/>
    <property type="evidence" value="ECO:0007669"/>
    <property type="project" value="UniProtKB-UniRule"/>
</dbReference>
<dbReference type="GO" id="GO:0016114">
    <property type="term" value="P:terpenoid biosynthetic process"/>
    <property type="evidence" value="ECO:0007669"/>
    <property type="project" value="UniProtKB-UniRule"/>
</dbReference>
<dbReference type="CDD" id="cd13944">
    <property type="entry name" value="lytB_ispH"/>
    <property type="match status" value="1"/>
</dbReference>
<dbReference type="FunFam" id="3.40.1010.20:FF:000001">
    <property type="entry name" value="4-hydroxy-3-methylbut-2-enyl diphosphate reductase"/>
    <property type="match status" value="1"/>
</dbReference>
<dbReference type="FunFam" id="3.40.50.11270:FF:000001">
    <property type="entry name" value="4-hydroxy-3-methylbut-2-enyl diphosphate reductase"/>
    <property type="match status" value="1"/>
</dbReference>
<dbReference type="Gene3D" id="3.40.50.11270">
    <property type="match status" value="1"/>
</dbReference>
<dbReference type="Gene3D" id="3.40.1010.20">
    <property type="entry name" value="4-hydroxy-3-methylbut-2-enyl diphosphate reductase, catalytic domain"/>
    <property type="match status" value="2"/>
</dbReference>
<dbReference type="HAMAP" id="MF_00191">
    <property type="entry name" value="IspH"/>
    <property type="match status" value="1"/>
</dbReference>
<dbReference type="InterPro" id="IPR003451">
    <property type="entry name" value="LytB/IspH"/>
</dbReference>
<dbReference type="NCBIfam" id="TIGR00216">
    <property type="entry name" value="ispH_lytB"/>
    <property type="match status" value="1"/>
</dbReference>
<dbReference type="NCBIfam" id="NF002188">
    <property type="entry name" value="PRK01045.1-2"/>
    <property type="match status" value="1"/>
</dbReference>
<dbReference type="NCBIfam" id="NF002190">
    <property type="entry name" value="PRK01045.1-4"/>
    <property type="match status" value="1"/>
</dbReference>
<dbReference type="PANTHER" id="PTHR30426">
    <property type="entry name" value="4-HYDROXY-3-METHYLBUT-2-ENYL DIPHOSPHATE REDUCTASE"/>
    <property type="match status" value="1"/>
</dbReference>
<dbReference type="PANTHER" id="PTHR30426:SF0">
    <property type="entry name" value="4-HYDROXY-3-METHYLBUT-2-ENYL DIPHOSPHATE REDUCTASE"/>
    <property type="match status" value="1"/>
</dbReference>
<dbReference type="Pfam" id="PF02401">
    <property type="entry name" value="LYTB"/>
    <property type="match status" value="1"/>
</dbReference>
<comment type="function">
    <text evidence="1">Catalyzes the conversion of 1-hydroxy-2-methyl-2-(E)-butenyl 4-diphosphate (HMBPP) into a mixture of isopentenyl diphosphate (IPP) and dimethylallyl diphosphate (DMAPP). Acts in the terminal step of the DOXP/MEP pathway for isoprenoid precursor biosynthesis.</text>
</comment>
<comment type="catalytic activity">
    <reaction evidence="1">
        <text>isopentenyl diphosphate + 2 oxidized [2Fe-2S]-[ferredoxin] + H2O = (2E)-4-hydroxy-3-methylbut-2-enyl diphosphate + 2 reduced [2Fe-2S]-[ferredoxin] + 2 H(+)</text>
        <dbReference type="Rhea" id="RHEA:24488"/>
        <dbReference type="Rhea" id="RHEA-COMP:10000"/>
        <dbReference type="Rhea" id="RHEA-COMP:10001"/>
        <dbReference type="ChEBI" id="CHEBI:15377"/>
        <dbReference type="ChEBI" id="CHEBI:15378"/>
        <dbReference type="ChEBI" id="CHEBI:33737"/>
        <dbReference type="ChEBI" id="CHEBI:33738"/>
        <dbReference type="ChEBI" id="CHEBI:128753"/>
        <dbReference type="ChEBI" id="CHEBI:128769"/>
        <dbReference type="EC" id="1.17.7.4"/>
    </reaction>
</comment>
<comment type="catalytic activity">
    <reaction evidence="1">
        <text>dimethylallyl diphosphate + 2 oxidized [2Fe-2S]-[ferredoxin] + H2O = (2E)-4-hydroxy-3-methylbut-2-enyl diphosphate + 2 reduced [2Fe-2S]-[ferredoxin] + 2 H(+)</text>
        <dbReference type="Rhea" id="RHEA:24825"/>
        <dbReference type="Rhea" id="RHEA-COMP:10000"/>
        <dbReference type="Rhea" id="RHEA-COMP:10001"/>
        <dbReference type="ChEBI" id="CHEBI:15377"/>
        <dbReference type="ChEBI" id="CHEBI:15378"/>
        <dbReference type="ChEBI" id="CHEBI:33737"/>
        <dbReference type="ChEBI" id="CHEBI:33738"/>
        <dbReference type="ChEBI" id="CHEBI:57623"/>
        <dbReference type="ChEBI" id="CHEBI:128753"/>
        <dbReference type="EC" id="1.17.7.4"/>
    </reaction>
</comment>
<comment type="cofactor">
    <cofactor evidence="1">
        <name>[4Fe-4S] cluster</name>
        <dbReference type="ChEBI" id="CHEBI:49883"/>
    </cofactor>
    <text evidence="1">Binds 1 [4Fe-4S] cluster per subunit.</text>
</comment>
<comment type="pathway">
    <text evidence="1">Isoprenoid biosynthesis; dimethylallyl diphosphate biosynthesis; dimethylallyl diphosphate from (2E)-4-hydroxy-3-methylbutenyl diphosphate: step 1/1.</text>
</comment>
<comment type="pathway">
    <text evidence="1">Isoprenoid biosynthesis; isopentenyl diphosphate biosynthesis via DXP pathway; isopentenyl diphosphate from 1-deoxy-D-xylulose 5-phosphate: step 6/6.</text>
</comment>
<comment type="subunit">
    <text evidence="1">Homodimer.</text>
</comment>
<comment type="similarity">
    <text evidence="1">Belongs to the IspH family.</text>
</comment>